<name>SUCC_THIDA</name>
<keyword id="KW-0067">ATP-binding</keyword>
<keyword id="KW-0436">Ligase</keyword>
<keyword id="KW-0460">Magnesium</keyword>
<keyword id="KW-0479">Metal-binding</keyword>
<keyword id="KW-0547">Nucleotide-binding</keyword>
<keyword id="KW-1185">Reference proteome</keyword>
<keyword id="KW-0816">Tricarboxylic acid cycle</keyword>
<sequence length="386" mass="40315">MNLHEYQAKQVLRSSNLNTPRGIAATSADAAADAARELGGEAWVVKAQIHAGGRGKAGGVKVVTSIDAVRSVAAALLGKPLVTVQNAPDGQPVHTVLVEETLPIARELYLSLLVDRASERVAVVASAAGGMDIEQVAHATPEKVLTEICDPLLGVQDFQCRALAFALGLGGDAYKDFCRLLPQLYRVFVANDLSLLEINPLVVTTDNRVLPLDCKMSVDDNALYRRKALADLRDDSQIDAKEAAANAANVNYVALAGNIGCMVNGAGLAMATMDLIQLEGGAPANFLDVGGGATPETVAQGFKIILLDPNVKAVLINIFGGIVRCDVIAEGIIQAVREVGVEVPVIVRLEGTNAELGRTLLAESGLAIVAAESLTQAAKFAVEKAA</sequence>
<comment type="function">
    <text evidence="1">Succinyl-CoA synthetase functions in the citric acid cycle (TCA), coupling the hydrolysis of succinyl-CoA to the synthesis of either ATP or GTP and thus represents the only step of substrate-level phosphorylation in the TCA. The beta subunit provides nucleotide specificity of the enzyme and binds the substrate succinate, while the binding sites for coenzyme A and phosphate are found in the alpha subunit.</text>
</comment>
<comment type="catalytic activity">
    <reaction evidence="1">
        <text>succinate + ATP + CoA = succinyl-CoA + ADP + phosphate</text>
        <dbReference type="Rhea" id="RHEA:17661"/>
        <dbReference type="ChEBI" id="CHEBI:30031"/>
        <dbReference type="ChEBI" id="CHEBI:30616"/>
        <dbReference type="ChEBI" id="CHEBI:43474"/>
        <dbReference type="ChEBI" id="CHEBI:57287"/>
        <dbReference type="ChEBI" id="CHEBI:57292"/>
        <dbReference type="ChEBI" id="CHEBI:456216"/>
        <dbReference type="EC" id="6.2.1.5"/>
    </reaction>
    <physiologicalReaction direction="right-to-left" evidence="1">
        <dbReference type="Rhea" id="RHEA:17663"/>
    </physiologicalReaction>
</comment>
<comment type="catalytic activity">
    <reaction evidence="1">
        <text>GTP + succinate + CoA = succinyl-CoA + GDP + phosphate</text>
        <dbReference type="Rhea" id="RHEA:22120"/>
        <dbReference type="ChEBI" id="CHEBI:30031"/>
        <dbReference type="ChEBI" id="CHEBI:37565"/>
        <dbReference type="ChEBI" id="CHEBI:43474"/>
        <dbReference type="ChEBI" id="CHEBI:57287"/>
        <dbReference type="ChEBI" id="CHEBI:57292"/>
        <dbReference type="ChEBI" id="CHEBI:58189"/>
    </reaction>
    <physiologicalReaction direction="right-to-left" evidence="1">
        <dbReference type="Rhea" id="RHEA:22122"/>
    </physiologicalReaction>
</comment>
<comment type="cofactor">
    <cofactor evidence="1">
        <name>Mg(2+)</name>
        <dbReference type="ChEBI" id="CHEBI:18420"/>
    </cofactor>
    <text evidence="1">Binds 1 Mg(2+) ion per subunit.</text>
</comment>
<comment type="pathway">
    <text evidence="1">Carbohydrate metabolism; tricarboxylic acid cycle; succinate from succinyl-CoA (ligase route): step 1/1.</text>
</comment>
<comment type="subunit">
    <text evidence="1">Heterotetramer of two alpha and two beta subunits.</text>
</comment>
<comment type="similarity">
    <text evidence="1">Belongs to the succinate/malate CoA ligase beta subunit family.</text>
</comment>
<evidence type="ECO:0000255" key="1">
    <source>
        <dbReference type="HAMAP-Rule" id="MF_00558"/>
    </source>
</evidence>
<proteinExistence type="inferred from homology"/>
<accession>Q3SKM1</accession>
<organism>
    <name type="scientific">Thiobacillus denitrificans (strain ATCC 25259 / T1)</name>
    <dbReference type="NCBI Taxonomy" id="292415"/>
    <lineage>
        <taxon>Bacteria</taxon>
        <taxon>Pseudomonadati</taxon>
        <taxon>Pseudomonadota</taxon>
        <taxon>Betaproteobacteria</taxon>
        <taxon>Nitrosomonadales</taxon>
        <taxon>Thiobacillaceae</taxon>
        <taxon>Thiobacillus</taxon>
    </lineage>
</organism>
<dbReference type="EC" id="6.2.1.5" evidence="1"/>
<dbReference type="EMBL" id="CP000116">
    <property type="protein sequence ID" value="AAZ96758.1"/>
    <property type="molecule type" value="Genomic_DNA"/>
</dbReference>
<dbReference type="RefSeq" id="WP_011311317.1">
    <property type="nucleotide sequence ID" value="NC_007404.1"/>
</dbReference>
<dbReference type="SMR" id="Q3SKM1"/>
<dbReference type="STRING" id="292415.Tbd_0805"/>
<dbReference type="KEGG" id="tbd:Tbd_0805"/>
<dbReference type="eggNOG" id="COG0045">
    <property type="taxonomic scope" value="Bacteria"/>
</dbReference>
<dbReference type="HOGENOM" id="CLU_037430_0_2_4"/>
<dbReference type="OrthoDB" id="9802602at2"/>
<dbReference type="UniPathway" id="UPA00223">
    <property type="reaction ID" value="UER00999"/>
</dbReference>
<dbReference type="Proteomes" id="UP000008291">
    <property type="component" value="Chromosome"/>
</dbReference>
<dbReference type="GO" id="GO:0005829">
    <property type="term" value="C:cytosol"/>
    <property type="evidence" value="ECO:0007669"/>
    <property type="project" value="TreeGrafter"/>
</dbReference>
<dbReference type="GO" id="GO:0042709">
    <property type="term" value="C:succinate-CoA ligase complex"/>
    <property type="evidence" value="ECO:0007669"/>
    <property type="project" value="TreeGrafter"/>
</dbReference>
<dbReference type="GO" id="GO:0005524">
    <property type="term" value="F:ATP binding"/>
    <property type="evidence" value="ECO:0007669"/>
    <property type="project" value="UniProtKB-UniRule"/>
</dbReference>
<dbReference type="GO" id="GO:0000287">
    <property type="term" value="F:magnesium ion binding"/>
    <property type="evidence" value="ECO:0007669"/>
    <property type="project" value="UniProtKB-UniRule"/>
</dbReference>
<dbReference type="GO" id="GO:0004775">
    <property type="term" value="F:succinate-CoA ligase (ADP-forming) activity"/>
    <property type="evidence" value="ECO:0007669"/>
    <property type="project" value="UniProtKB-UniRule"/>
</dbReference>
<dbReference type="GO" id="GO:0004776">
    <property type="term" value="F:succinate-CoA ligase (GDP-forming) activity"/>
    <property type="evidence" value="ECO:0007669"/>
    <property type="project" value="RHEA"/>
</dbReference>
<dbReference type="GO" id="GO:0006104">
    <property type="term" value="P:succinyl-CoA metabolic process"/>
    <property type="evidence" value="ECO:0007669"/>
    <property type="project" value="TreeGrafter"/>
</dbReference>
<dbReference type="GO" id="GO:0006099">
    <property type="term" value="P:tricarboxylic acid cycle"/>
    <property type="evidence" value="ECO:0007669"/>
    <property type="project" value="UniProtKB-UniRule"/>
</dbReference>
<dbReference type="FunFam" id="3.30.1490.20:FF:000002">
    <property type="entry name" value="Succinate--CoA ligase [ADP-forming] subunit beta"/>
    <property type="match status" value="1"/>
</dbReference>
<dbReference type="FunFam" id="3.30.470.20:FF:000002">
    <property type="entry name" value="Succinate--CoA ligase [ADP-forming] subunit beta"/>
    <property type="match status" value="1"/>
</dbReference>
<dbReference type="FunFam" id="3.40.50.261:FF:000001">
    <property type="entry name" value="Succinate--CoA ligase [ADP-forming] subunit beta"/>
    <property type="match status" value="1"/>
</dbReference>
<dbReference type="Gene3D" id="3.30.1490.20">
    <property type="entry name" value="ATP-grasp fold, A domain"/>
    <property type="match status" value="1"/>
</dbReference>
<dbReference type="Gene3D" id="3.30.470.20">
    <property type="entry name" value="ATP-grasp fold, B domain"/>
    <property type="match status" value="1"/>
</dbReference>
<dbReference type="Gene3D" id="3.40.50.261">
    <property type="entry name" value="Succinyl-CoA synthetase domains"/>
    <property type="match status" value="1"/>
</dbReference>
<dbReference type="HAMAP" id="MF_00558">
    <property type="entry name" value="Succ_CoA_beta"/>
    <property type="match status" value="1"/>
</dbReference>
<dbReference type="InterPro" id="IPR011761">
    <property type="entry name" value="ATP-grasp"/>
</dbReference>
<dbReference type="InterPro" id="IPR013650">
    <property type="entry name" value="ATP-grasp_succ-CoA_synth-type"/>
</dbReference>
<dbReference type="InterPro" id="IPR013815">
    <property type="entry name" value="ATP_grasp_subdomain_1"/>
</dbReference>
<dbReference type="InterPro" id="IPR017866">
    <property type="entry name" value="Succ-CoA_synthase_bsu_CS"/>
</dbReference>
<dbReference type="InterPro" id="IPR005811">
    <property type="entry name" value="SUCC_ACL_C"/>
</dbReference>
<dbReference type="InterPro" id="IPR005809">
    <property type="entry name" value="Succ_CoA_ligase-like_bsu"/>
</dbReference>
<dbReference type="InterPro" id="IPR016102">
    <property type="entry name" value="Succinyl-CoA_synth-like"/>
</dbReference>
<dbReference type="NCBIfam" id="NF001913">
    <property type="entry name" value="PRK00696.1"/>
    <property type="match status" value="1"/>
</dbReference>
<dbReference type="NCBIfam" id="TIGR01016">
    <property type="entry name" value="sucCoAbeta"/>
    <property type="match status" value="1"/>
</dbReference>
<dbReference type="PANTHER" id="PTHR11815:SF10">
    <property type="entry name" value="SUCCINATE--COA LIGASE [GDP-FORMING] SUBUNIT BETA, MITOCHONDRIAL"/>
    <property type="match status" value="1"/>
</dbReference>
<dbReference type="PANTHER" id="PTHR11815">
    <property type="entry name" value="SUCCINYL-COA SYNTHETASE BETA CHAIN"/>
    <property type="match status" value="1"/>
</dbReference>
<dbReference type="Pfam" id="PF08442">
    <property type="entry name" value="ATP-grasp_2"/>
    <property type="match status" value="1"/>
</dbReference>
<dbReference type="Pfam" id="PF00549">
    <property type="entry name" value="Ligase_CoA"/>
    <property type="match status" value="1"/>
</dbReference>
<dbReference type="PIRSF" id="PIRSF001554">
    <property type="entry name" value="SucCS_beta"/>
    <property type="match status" value="1"/>
</dbReference>
<dbReference type="SUPFAM" id="SSF56059">
    <property type="entry name" value="Glutathione synthetase ATP-binding domain-like"/>
    <property type="match status" value="1"/>
</dbReference>
<dbReference type="SUPFAM" id="SSF52210">
    <property type="entry name" value="Succinyl-CoA synthetase domains"/>
    <property type="match status" value="1"/>
</dbReference>
<dbReference type="PROSITE" id="PS50975">
    <property type="entry name" value="ATP_GRASP"/>
    <property type="match status" value="1"/>
</dbReference>
<dbReference type="PROSITE" id="PS01217">
    <property type="entry name" value="SUCCINYL_COA_LIG_3"/>
    <property type="match status" value="1"/>
</dbReference>
<feature type="chain" id="PRO_1000082254" description="Succinate--CoA ligase [ADP-forming] subunit beta">
    <location>
        <begin position="1"/>
        <end position="386"/>
    </location>
</feature>
<feature type="domain" description="ATP-grasp" evidence="1">
    <location>
        <begin position="9"/>
        <end position="244"/>
    </location>
</feature>
<feature type="binding site" evidence="1">
    <location>
        <position position="46"/>
    </location>
    <ligand>
        <name>ATP</name>
        <dbReference type="ChEBI" id="CHEBI:30616"/>
    </ligand>
</feature>
<feature type="binding site" evidence="1">
    <location>
        <begin position="53"/>
        <end position="55"/>
    </location>
    <ligand>
        <name>ATP</name>
        <dbReference type="ChEBI" id="CHEBI:30616"/>
    </ligand>
</feature>
<feature type="binding site" evidence="1">
    <location>
        <position position="99"/>
    </location>
    <ligand>
        <name>ATP</name>
        <dbReference type="ChEBI" id="CHEBI:30616"/>
    </ligand>
</feature>
<feature type="binding site" evidence="1">
    <location>
        <position position="102"/>
    </location>
    <ligand>
        <name>ATP</name>
        <dbReference type="ChEBI" id="CHEBI:30616"/>
    </ligand>
</feature>
<feature type="binding site" evidence="1">
    <location>
        <position position="107"/>
    </location>
    <ligand>
        <name>ATP</name>
        <dbReference type="ChEBI" id="CHEBI:30616"/>
    </ligand>
</feature>
<feature type="binding site" evidence="1">
    <location>
        <position position="199"/>
    </location>
    <ligand>
        <name>Mg(2+)</name>
        <dbReference type="ChEBI" id="CHEBI:18420"/>
    </ligand>
</feature>
<feature type="binding site" evidence="1">
    <location>
        <position position="213"/>
    </location>
    <ligand>
        <name>Mg(2+)</name>
        <dbReference type="ChEBI" id="CHEBI:18420"/>
    </ligand>
</feature>
<feature type="binding site" evidence="1">
    <location>
        <position position="264"/>
    </location>
    <ligand>
        <name>substrate</name>
        <note>ligand shared with subunit alpha</note>
    </ligand>
</feature>
<feature type="binding site" evidence="1">
    <location>
        <begin position="321"/>
        <end position="323"/>
    </location>
    <ligand>
        <name>substrate</name>
        <note>ligand shared with subunit alpha</note>
    </ligand>
</feature>
<reference key="1">
    <citation type="journal article" date="2006" name="J. Bacteriol.">
        <title>The genome sequence of the obligately chemolithoautotrophic, facultatively anaerobic bacterium Thiobacillus denitrificans.</title>
        <authorList>
            <person name="Beller H.R."/>
            <person name="Chain P.S."/>
            <person name="Letain T.E."/>
            <person name="Chakicherla A."/>
            <person name="Larimer F.W."/>
            <person name="Richardson P.M."/>
            <person name="Coleman M.A."/>
            <person name="Wood A.P."/>
            <person name="Kelly D.P."/>
        </authorList>
    </citation>
    <scope>NUCLEOTIDE SEQUENCE [LARGE SCALE GENOMIC DNA]</scope>
    <source>
        <strain>ATCC 25259 / T1</strain>
    </source>
</reference>
<gene>
    <name evidence="1" type="primary">sucC</name>
    <name type="ordered locus">Tbd_0805</name>
</gene>
<protein>
    <recommendedName>
        <fullName evidence="1">Succinate--CoA ligase [ADP-forming] subunit beta</fullName>
        <ecNumber evidence="1">6.2.1.5</ecNumber>
    </recommendedName>
    <alternativeName>
        <fullName evidence="1">Succinyl-CoA synthetase subunit beta</fullName>
        <shortName evidence="1">SCS-beta</shortName>
    </alternativeName>
</protein>